<sequence length="689" mass="75649">MFERNQKTIFVLDHTRYFSIASEEYISMDFLKGKPSGDGGATGAAGNATGSGGSQFSKSLWTCACESSIEYCRVVWDLFPGKKHVRFIVSDTAAHIVNTWSPSTQNMSHVMNAMVMVGVPSRNVPTSSDYSVIHGLRAAIEALAEPTDEQLAAMADLGTDELPRIPNKGRVICITSARDNTSMKSLEDIFNTVLVQQNTLAAPPAKKGLVIDHCHLVILNIVPLGVESLVTNRSLLKISPLLDVEIHTVSAPDISYKLTHLILNHYDLASTTVTNIPMKEEQNANSSANYDVEILHSRRAHSITCGPDFSLPTSIKQGATYETVTLKWCTPRGCGSAHLQPCLGQFLVTPVDVTSRPSSCLINFLLNGRSVLLEMPRKTGSKATSHMLSARGGEIFVHSLCITRSCMDEAPSITDGPGGRVSDYRTAELGQLIKMSRMVPLKVKDPSAPPLTRRLPRYFPLTTSSSILFHLQRHISWLPHFLHLLVKEDMDKQDEVRCQQHIHELYKSASRGDVLPFTHTNGARLKLSKAKDQYRLLYRELEQLIQLNATTMHHKNLLESLQSLRAAYGDAPLKSEPGASLLRSFTESPLSPERLEPISSVGASGSSNSNSLLKASKRRMSSCGQRSLLDIISSAERSQSNKRLDFSGRLCTPLGQVAKLYPEFGTKDKDAVTTGASITPNVKEESVRS</sequence>
<evidence type="ECO:0000250" key="1">
    <source>
        <dbReference type="UniProtKB" id="Q9VEX5"/>
    </source>
</evidence>
<evidence type="ECO:0000255" key="2"/>
<evidence type="ECO:0000256" key="3">
    <source>
        <dbReference type="SAM" id="MobiDB-lite"/>
    </source>
</evidence>
<evidence type="ECO:0000305" key="4"/>
<evidence type="ECO:0000312" key="5">
    <source>
        <dbReference type="EMBL" id="EDX12713.1"/>
    </source>
</evidence>
<gene>
    <name type="primary">asun</name>
    <name type="synonym">Mat89Bb</name>
    <name type="ORF">GD19084</name>
</gene>
<comment type="function">
    <text evidence="1">Component of the integrator complex, a multiprotein complex that terminates RNA polymerase II (Pol II) transcription in the promoter-proximal region of genes. The integrator complex provides a quality checkpoint during transcription elongation by driving premature transcription termination of transcripts that are unfavorably configured for transcriptional elongation: the complex terminates transcription by (1) catalyzing dephosphorylation of the C-terminal domain (CTD) of Pol II subunit Polr2A/Rbp1 and Spt5, and (2) degrading the exiting nascent RNA transcript via endonuclease activity. The integrator complex is also involved in the 3'-end processing of the U7 snRNA, and also the spliceosomal snRNAs U1, U2, U4 and U5.</text>
</comment>
<comment type="subunit">
    <text evidence="1">Belongs to the multiprotein complex Integrator, at least composed of IntS1, IntS2, IntS3, IntS4, omd/IntS5, IntS6, defl/IntS7, IntS8, IntS9, IntS10, IntS11, IntS12, asun/IntS13, IntS14 and IntS15. The core complex associates with protein phosphatase 2A subunits mts/PP2A and Pp2A-29B, to form the Integrator-PP2A (INTAC) complex.</text>
</comment>
<comment type="subcellular location">
    <subcellularLocation>
        <location evidence="1">Nucleus</location>
    </subcellularLocation>
    <subcellularLocation>
        <location evidence="1">Cytoplasm</location>
    </subcellularLocation>
    <subcellularLocation>
        <location evidence="1">Cytoplasm</location>
        <location evidence="1">Perinuclear region</location>
    </subcellularLocation>
    <text evidence="1">Colocalizes with dynein-dynactin on the nuclear surface at the meiotic G2/prophase transition in primary spermatocytes. Nuclear location is required for recruitment of dynein motors to nuclear envelope at G2/M.</text>
</comment>
<comment type="PTM">
    <text evidence="1">Phosphorylated.</text>
</comment>
<comment type="similarity">
    <text evidence="4">Belongs to the Integrator subunit 13 family.</text>
</comment>
<proteinExistence type="inferred from homology"/>
<organism>
    <name type="scientific">Drosophila simulans</name>
    <name type="common">Fruit fly</name>
    <dbReference type="NCBI Taxonomy" id="7240"/>
    <lineage>
        <taxon>Eukaryota</taxon>
        <taxon>Metazoa</taxon>
        <taxon>Ecdysozoa</taxon>
        <taxon>Arthropoda</taxon>
        <taxon>Hexapoda</taxon>
        <taxon>Insecta</taxon>
        <taxon>Pterygota</taxon>
        <taxon>Neoptera</taxon>
        <taxon>Endopterygota</taxon>
        <taxon>Diptera</taxon>
        <taxon>Brachycera</taxon>
        <taxon>Muscomorpha</taxon>
        <taxon>Ephydroidea</taxon>
        <taxon>Drosophilidae</taxon>
        <taxon>Drosophila</taxon>
        <taxon>Sophophora</taxon>
    </lineage>
</organism>
<protein>
    <recommendedName>
        <fullName>Protein asunder</fullName>
    </recommendedName>
    <alternativeName>
        <fullName evidence="1">Cell cycle regulator Mat89Bb</fullName>
    </alternativeName>
    <alternativeName>
        <fullName evidence="1">Maternal transcript 89Bb</fullName>
    </alternativeName>
    <alternativeName>
        <fullName>Set apart in position or space protein</fullName>
    </alternativeName>
</protein>
<accession>B4QX59</accession>
<keyword id="KW-0131">Cell cycle</keyword>
<keyword id="KW-0132">Cell division</keyword>
<keyword id="KW-0175">Coiled coil</keyword>
<keyword id="KW-0963">Cytoplasm</keyword>
<keyword id="KW-0217">Developmental protein</keyword>
<keyword id="KW-0221">Differentiation</keyword>
<keyword id="KW-0469">Meiosis</keyword>
<keyword id="KW-0498">Mitosis</keyword>
<keyword id="KW-0539">Nucleus</keyword>
<keyword id="KW-0597">Phosphoprotein</keyword>
<keyword id="KW-1185">Reference proteome</keyword>
<keyword id="KW-0744">Spermatogenesis</keyword>
<reference evidence="5" key="1">
    <citation type="journal article" date="2007" name="Nature">
        <title>Evolution of genes and genomes on the Drosophila phylogeny.</title>
        <authorList>
            <consortium name="Drosophila 12 genomes consortium"/>
        </authorList>
    </citation>
    <scope>NUCLEOTIDE SEQUENCE [LARGE SCALE GENOMIC DNA]</scope>
</reference>
<feature type="chain" id="PRO_0000385347" description="Protein asunder">
    <location>
        <begin position="1"/>
        <end position="689"/>
    </location>
</feature>
<feature type="region of interest" description="Disordered" evidence="3">
    <location>
        <begin position="591"/>
        <end position="619"/>
    </location>
</feature>
<feature type="region of interest" description="Disordered" evidence="3">
    <location>
        <begin position="669"/>
        <end position="689"/>
    </location>
</feature>
<feature type="coiled-coil region" evidence="2">
    <location>
        <begin position="521"/>
        <end position="550"/>
    </location>
</feature>
<feature type="short sequence motif" description="Nuclear localization signal (NLS)" evidence="1">
    <location>
        <begin position="613"/>
        <end position="619"/>
    </location>
</feature>
<feature type="compositionally biased region" description="Low complexity" evidence="3">
    <location>
        <begin position="599"/>
        <end position="614"/>
    </location>
</feature>
<dbReference type="EMBL" id="CM000364">
    <property type="protein sequence ID" value="EDX12713.1"/>
    <property type="molecule type" value="Genomic_DNA"/>
</dbReference>
<dbReference type="SMR" id="B4QX59"/>
<dbReference type="STRING" id="7240.B4QX59"/>
<dbReference type="HOGENOM" id="CLU_012654_1_0_1"/>
<dbReference type="OMA" id="NCTAMHR"/>
<dbReference type="OrthoDB" id="5844105at2759"/>
<dbReference type="PhylomeDB" id="B4QX59"/>
<dbReference type="Proteomes" id="UP000000304">
    <property type="component" value="Chromosome 3R"/>
</dbReference>
<dbReference type="GO" id="GO:0005737">
    <property type="term" value="C:cytoplasm"/>
    <property type="evidence" value="ECO:0000250"/>
    <property type="project" value="UniProtKB"/>
</dbReference>
<dbReference type="GO" id="GO:0160232">
    <property type="term" value="C:INTAC complex"/>
    <property type="evidence" value="ECO:0007669"/>
    <property type="project" value="EnsemblMetazoa"/>
</dbReference>
<dbReference type="GO" id="GO:0032039">
    <property type="term" value="C:integrator complex"/>
    <property type="evidence" value="ECO:0007669"/>
    <property type="project" value="EnsemblMetazoa"/>
</dbReference>
<dbReference type="GO" id="GO:0005634">
    <property type="term" value="C:nucleus"/>
    <property type="evidence" value="ECO:0000250"/>
    <property type="project" value="UniProtKB"/>
</dbReference>
<dbReference type="GO" id="GO:0048471">
    <property type="term" value="C:perinuclear region of cytoplasm"/>
    <property type="evidence" value="ECO:0007669"/>
    <property type="project" value="UniProtKB-SubCell"/>
</dbReference>
<dbReference type="GO" id="GO:0051301">
    <property type="term" value="P:cell division"/>
    <property type="evidence" value="ECO:0007669"/>
    <property type="project" value="UniProtKB-KW"/>
</dbReference>
<dbReference type="GO" id="GO:0051642">
    <property type="term" value="P:centrosome localization"/>
    <property type="evidence" value="ECO:0007669"/>
    <property type="project" value="EnsemblMetazoa"/>
</dbReference>
<dbReference type="GO" id="GO:0046843">
    <property type="term" value="P:dorsal appendage formation"/>
    <property type="evidence" value="ECO:0007669"/>
    <property type="project" value="EnsemblMetazoa"/>
</dbReference>
<dbReference type="GO" id="GO:0030317">
    <property type="term" value="P:flagellated sperm motility"/>
    <property type="evidence" value="ECO:0000250"/>
    <property type="project" value="UniProtKB"/>
</dbReference>
<dbReference type="GO" id="GO:0051321">
    <property type="term" value="P:meiotic cell cycle"/>
    <property type="evidence" value="ECO:0007669"/>
    <property type="project" value="UniProtKB-KW"/>
</dbReference>
<dbReference type="GO" id="GO:0051663">
    <property type="term" value="P:oocyte nucleus localization involved in oocyte dorsal/ventral axis specification"/>
    <property type="evidence" value="ECO:0007669"/>
    <property type="project" value="EnsemblMetazoa"/>
</dbReference>
<dbReference type="GO" id="GO:0060814">
    <property type="term" value="P:posterior mRNA localization involved in anterior/posterior axis specification"/>
    <property type="evidence" value="ECO:0007669"/>
    <property type="project" value="EnsemblMetazoa"/>
</dbReference>
<dbReference type="GO" id="GO:0080154">
    <property type="term" value="P:regulation of fertilization"/>
    <property type="evidence" value="ECO:0000250"/>
    <property type="project" value="UniProtKB"/>
</dbReference>
<dbReference type="GO" id="GO:0007346">
    <property type="term" value="P:regulation of mitotic cell cycle"/>
    <property type="evidence" value="ECO:0000250"/>
    <property type="project" value="UniProtKB"/>
</dbReference>
<dbReference type="GO" id="GO:0160240">
    <property type="term" value="P:RNA polymerase II transcription initiation surveillance"/>
    <property type="evidence" value="ECO:0007669"/>
    <property type="project" value="EnsemblMetazoa"/>
</dbReference>
<dbReference type="GO" id="GO:0034472">
    <property type="term" value="P:snRNA 3'-end processing"/>
    <property type="evidence" value="ECO:0007669"/>
    <property type="project" value="EnsemblMetazoa"/>
</dbReference>
<dbReference type="GO" id="GO:0007283">
    <property type="term" value="P:spermatogenesis"/>
    <property type="evidence" value="ECO:0007669"/>
    <property type="project" value="UniProtKB-KW"/>
</dbReference>
<dbReference type="InterPro" id="IPR019355">
    <property type="entry name" value="Cell_cycle_regulator_Mat89Bb"/>
</dbReference>
<dbReference type="PANTHER" id="PTHR12955:SF1">
    <property type="entry name" value="INTEGRATOR COMPLEX SUBUNIT 13"/>
    <property type="match status" value="1"/>
</dbReference>
<dbReference type="PANTHER" id="PTHR12955">
    <property type="entry name" value="SARCOMA ANTIGEN NY-SAR-95-RELATED"/>
    <property type="match status" value="1"/>
</dbReference>
<dbReference type="Pfam" id="PF10221">
    <property type="entry name" value="Mat89Bb"/>
    <property type="match status" value="1"/>
</dbReference>
<name>INT13_DROSI</name>